<dbReference type="EC" id="3.4.21.92" evidence="1"/>
<dbReference type="EMBL" id="AE017226">
    <property type="protein sequence ID" value="AAS12906.1"/>
    <property type="molecule type" value="Genomic_DNA"/>
</dbReference>
<dbReference type="RefSeq" id="NP_972987.1">
    <property type="nucleotide sequence ID" value="NC_002967.9"/>
</dbReference>
<dbReference type="RefSeq" id="WP_002667667.1">
    <property type="nucleotide sequence ID" value="NC_002967.9"/>
</dbReference>
<dbReference type="SMR" id="Q73JM9"/>
<dbReference type="STRING" id="243275.TDE_2388"/>
<dbReference type="PaxDb" id="243275-TDE_2388"/>
<dbReference type="GeneID" id="2740690"/>
<dbReference type="KEGG" id="tde:TDE_2388"/>
<dbReference type="PATRIC" id="fig|243275.7.peg.2256"/>
<dbReference type="eggNOG" id="COG0740">
    <property type="taxonomic scope" value="Bacteria"/>
</dbReference>
<dbReference type="HOGENOM" id="CLU_058707_4_0_12"/>
<dbReference type="OrthoDB" id="9802800at2"/>
<dbReference type="Proteomes" id="UP000008212">
    <property type="component" value="Chromosome"/>
</dbReference>
<dbReference type="GO" id="GO:0005737">
    <property type="term" value="C:cytoplasm"/>
    <property type="evidence" value="ECO:0007669"/>
    <property type="project" value="UniProtKB-SubCell"/>
</dbReference>
<dbReference type="GO" id="GO:0009368">
    <property type="term" value="C:endopeptidase Clp complex"/>
    <property type="evidence" value="ECO:0007669"/>
    <property type="project" value="TreeGrafter"/>
</dbReference>
<dbReference type="GO" id="GO:0004176">
    <property type="term" value="F:ATP-dependent peptidase activity"/>
    <property type="evidence" value="ECO:0007669"/>
    <property type="project" value="InterPro"/>
</dbReference>
<dbReference type="GO" id="GO:0051117">
    <property type="term" value="F:ATPase binding"/>
    <property type="evidence" value="ECO:0007669"/>
    <property type="project" value="TreeGrafter"/>
</dbReference>
<dbReference type="GO" id="GO:0004252">
    <property type="term" value="F:serine-type endopeptidase activity"/>
    <property type="evidence" value="ECO:0007669"/>
    <property type="project" value="UniProtKB-UniRule"/>
</dbReference>
<dbReference type="GO" id="GO:0006515">
    <property type="term" value="P:protein quality control for misfolded or incompletely synthesized proteins"/>
    <property type="evidence" value="ECO:0007669"/>
    <property type="project" value="TreeGrafter"/>
</dbReference>
<dbReference type="CDD" id="cd07017">
    <property type="entry name" value="S14_ClpP_2"/>
    <property type="match status" value="1"/>
</dbReference>
<dbReference type="Gene3D" id="3.90.226.10">
    <property type="entry name" value="2-enoyl-CoA Hydratase, Chain A, domain 1"/>
    <property type="match status" value="1"/>
</dbReference>
<dbReference type="HAMAP" id="MF_00444">
    <property type="entry name" value="ClpP"/>
    <property type="match status" value="1"/>
</dbReference>
<dbReference type="InterPro" id="IPR001907">
    <property type="entry name" value="ClpP"/>
</dbReference>
<dbReference type="InterPro" id="IPR029045">
    <property type="entry name" value="ClpP/crotonase-like_dom_sf"/>
</dbReference>
<dbReference type="InterPro" id="IPR023562">
    <property type="entry name" value="ClpP/TepA"/>
</dbReference>
<dbReference type="InterPro" id="IPR033135">
    <property type="entry name" value="ClpP_His_AS"/>
</dbReference>
<dbReference type="NCBIfam" id="NF009205">
    <property type="entry name" value="PRK12553.1"/>
    <property type="match status" value="1"/>
</dbReference>
<dbReference type="NCBIfam" id="NF011089">
    <property type="entry name" value="PRK14512.1"/>
    <property type="match status" value="1"/>
</dbReference>
<dbReference type="PANTHER" id="PTHR10381">
    <property type="entry name" value="ATP-DEPENDENT CLP PROTEASE PROTEOLYTIC SUBUNIT"/>
    <property type="match status" value="1"/>
</dbReference>
<dbReference type="PANTHER" id="PTHR10381:SF70">
    <property type="entry name" value="ATP-DEPENDENT CLP PROTEASE PROTEOLYTIC SUBUNIT"/>
    <property type="match status" value="1"/>
</dbReference>
<dbReference type="Pfam" id="PF00574">
    <property type="entry name" value="CLP_protease"/>
    <property type="match status" value="1"/>
</dbReference>
<dbReference type="PRINTS" id="PR00127">
    <property type="entry name" value="CLPPROTEASEP"/>
</dbReference>
<dbReference type="SUPFAM" id="SSF52096">
    <property type="entry name" value="ClpP/crotonase"/>
    <property type="match status" value="1"/>
</dbReference>
<dbReference type="PROSITE" id="PS00382">
    <property type="entry name" value="CLP_PROTEASE_HIS"/>
    <property type="match status" value="1"/>
</dbReference>
<keyword id="KW-0963">Cytoplasm</keyword>
<keyword id="KW-0378">Hydrolase</keyword>
<keyword id="KW-0645">Protease</keyword>
<keyword id="KW-1185">Reference proteome</keyword>
<keyword id="KW-0720">Serine protease</keyword>
<name>CLPP2_TREDE</name>
<protein>
    <recommendedName>
        <fullName evidence="1">ATP-dependent Clp protease proteolytic subunit 2</fullName>
        <ecNumber evidence="1">3.4.21.92</ecNumber>
    </recommendedName>
    <alternativeName>
        <fullName evidence="1">Endopeptidase Clp 2</fullName>
    </alternativeName>
</protein>
<sequence length="200" mass="22456">MNFINETNEEKKNKTNDDDALMQKFLNTRQIILAGEINKELSEKIVRQLLLMESLSATKPIYIYIDSPGGDADAGFAIFDMIRFIKAPVYTIGMGLVASAASIILLAASKERRFGMPNSHYLIHQPLSGIKGVATEIEIHAKELEKMRVKINKLIAEETGTDEKKVAKDTDRDCWLNAKESVEYGLISKIAKNRKDIPEK</sequence>
<gene>
    <name evidence="1" type="primary">clpP2</name>
    <name type="ordered locus">TDE_2388</name>
</gene>
<accession>Q73JM9</accession>
<feature type="chain" id="PRO_0000179703" description="ATP-dependent Clp protease proteolytic subunit 2">
    <location>
        <begin position="1"/>
        <end position="200"/>
    </location>
</feature>
<feature type="active site" description="Nucleophile" evidence="1">
    <location>
        <position position="99"/>
    </location>
</feature>
<feature type="active site" evidence="1">
    <location>
        <position position="124"/>
    </location>
</feature>
<evidence type="ECO:0000255" key="1">
    <source>
        <dbReference type="HAMAP-Rule" id="MF_00444"/>
    </source>
</evidence>
<reference key="1">
    <citation type="journal article" date="2004" name="Proc. Natl. Acad. Sci. U.S.A.">
        <title>Comparison of the genome of the oral pathogen Treponema denticola with other spirochete genomes.</title>
        <authorList>
            <person name="Seshadri R."/>
            <person name="Myers G.S.A."/>
            <person name="Tettelin H."/>
            <person name="Eisen J.A."/>
            <person name="Heidelberg J.F."/>
            <person name="Dodson R.J."/>
            <person name="Davidsen T.M."/>
            <person name="DeBoy R.T."/>
            <person name="Fouts D.E."/>
            <person name="Haft D.H."/>
            <person name="Selengut J."/>
            <person name="Ren Q."/>
            <person name="Brinkac L.M."/>
            <person name="Madupu R."/>
            <person name="Kolonay J.F."/>
            <person name="Durkin S.A."/>
            <person name="Daugherty S.C."/>
            <person name="Shetty J."/>
            <person name="Shvartsbeyn A."/>
            <person name="Gebregeorgis E."/>
            <person name="Geer K."/>
            <person name="Tsegaye G."/>
            <person name="Malek J.A."/>
            <person name="Ayodeji B."/>
            <person name="Shatsman S."/>
            <person name="McLeod M.P."/>
            <person name="Smajs D."/>
            <person name="Howell J.K."/>
            <person name="Pal S."/>
            <person name="Amin A."/>
            <person name="Vashisth P."/>
            <person name="McNeill T.Z."/>
            <person name="Xiang Q."/>
            <person name="Sodergren E."/>
            <person name="Baca E."/>
            <person name="Weinstock G.M."/>
            <person name="Norris S.J."/>
            <person name="Fraser C.M."/>
            <person name="Paulsen I.T."/>
        </authorList>
    </citation>
    <scope>NUCLEOTIDE SEQUENCE [LARGE SCALE GENOMIC DNA]</scope>
    <source>
        <strain>ATCC 35405 / DSM 14222 / CIP 103919 / JCM 8153 / KCTC 15104</strain>
    </source>
</reference>
<organism>
    <name type="scientific">Treponema denticola (strain ATCC 35405 / DSM 14222 / CIP 103919 / JCM 8153 / KCTC 15104)</name>
    <dbReference type="NCBI Taxonomy" id="243275"/>
    <lineage>
        <taxon>Bacteria</taxon>
        <taxon>Pseudomonadati</taxon>
        <taxon>Spirochaetota</taxon>
        <taxon>Spirochaetia</taxon>
        <taxon>Spirochaetales</taxon>
        <taxon>Treponemataceae</taxon>
        <taxon>Treponema</taxon>
    </lineage>
</organism>
<proteinExistence type="inferred from homology"/>
<comment type="function">
    <text evidence="1">Cleaves peptides in various proteins in a process that requires ATP hydrolysis. Has a chymotrypsin-like activity. Plays a major role in the degradation of misfolded proteins.</text>
</comment>
<comment type="catalytic activity">
    <reaction evidence="1">
        <text>Hydrolysis of proteins to small peptides in the presence of ATP and magnesium. alpha-casein is the usual test substrate. In the absence of ATP, only oligopeptides shorter than five residues are hydrolyzed (such as succinyl-Leu-Tyr-|-NHMec, and Leu-Tyr-Leu-|-Tyr-Trp, in which cleavage of the -Tyr-|-Leu- and -Tyr-|-Trp bonds also occurs).</text>
        <dbReference type="EC" id="3.4.21.92"/>
    </reaction>
</comment>
<comment type="subunit">
    <text evidence="1">Fourteen ClpP subunits assemble into 2 heptameric rings which stack back to back to give a disk-like structure with a central cavity, resembling the structure of eukaryotic proteasomes.</text>
</comment>
<comment type="subcellular location">
    <subcellularLocation>
        <location evidence="1">Cytoplasm</location>
    </subcellularLocation>
</comment>
<comment type="similarity">
    <text evidence="1">Belongs to the peptidase S14 family.</text>
</comment>